<gene>
    <name evidence="1" type="primary">rpsO</name>
    <name type="ordered locus">SaurJH1_1359</name>
</gene>
<sequence>MAISQERKNEIIKEYRVHETDTGSPEVQIAVLTAEINAVNEHLRTHKKDHHSRRGLLKMVGRRRHLLNYLRSKDIQRYRELIKSLGIRR</sequence>
<dbReference type="EMBL" id="CP000736">
    <property type="protein sequence ID" value="ABR52210.1"/>
    <property type="molecule type" value="Genomic_DNA"/>
</dbReference>
<dbReference type="SMR" id="A6U192"/>
<dbReference type="KEGG" id="sah:SaurJH1_1359"/>
<dbReference type="HOGENOM" id="CLU_148518_0_0_9"/>
<dbReference type="GO" id="GO:0022627">
    <property type="term" value="C:cytosolic small ribosomal subunit"/>
    <property type="evidence" value="ECO:0007669"/>
    <property type="project" value="TreeGrafter"/>
</dbReference>
<dbReference type="GO" id="GO:0019843">
    <property type="term" value="F:rRNA binding"/>
    <property type="evidence" value="ECO:0007669"/>
    <property type="project" value="UniProtKB-UniRule"/>
</dbReference>
<dbReference type="GO" id="GO:0003735">
    <property type="term" value="F:structural constituent of ribosome"/>
    <property type="evidence" value="ECO:0007669"/>
    <property type="project" value="InterPro"/>
</dbReference>
<dbReference type="GO" id="GO:0006412">
    <property type="term" value="P:translation"/>
    <property type="evidence" value="ECO:0007669"/>
    <property type="project" value="UniProtKB-UniRule"/>
</dbReference>
<dbReference type="CDD" id="cd00353">
    <property type="entry name" value="Ribosomal_S15p_S13e"/>
    <property type="match status" value="1"/>
</dbReference>
<dbReference type="FunFam" id="1.10.287.10:FF:000002">
    <property type="entry name" value="30S ribosomal protein S15"/>
    <property type="match status" value="1"/>
</dbReference>
<dbReference type="Gene3D" id="6.10.250.3130">
    <property type="match status" value="1"/>
</dbReference>
<dbReference type="Gene3D" id="1.10.287.10">
    <property type="entry name" value="S15/NS1, RNA-binding"/>
    <property type="match status" value="1"/>
</dbReference>
<dbReference type="HAMAP" id="MF_01343_B">
    <property type="entry name" value="Ribosomal_uS15_B"/>
    <property type="match status" value="1"/>
</dbReference>
<dbReference type="InterPro" id="IPR000589">
    <property type="entry name" value="Ribosomal_uS15"/>
</dbReference>
<dbReference type="InterPro" id="IPR005290">
    <property type="entry name" value="Ribosomal_uS15_bac-type"/>
</dbReference>
<dbReference type="InterPro" id="IPR009068">
    <property type="entry name" value="uS15_NS1_RNA-bd_sf"/>
</dbReference>
<dbReference type="NCBIfam" id="TIGR00952">
    <property type="entry name" value="S15_bact"/>
    <property type="match status" value="1"/>
</dbReference>
<dbReference type="PANTHER" id="PTHR23321">
    <property type="entry name" value="RIBOSOMAL PROTEIN S15, BACTERIAL AND ORGANELLAR"/>
    <property type="match status" value="1"/>
</dbReference>
<dbReference type="PANTHER" id="PTHR23321:SF26">
    <property type="entry name" value="SMALL RIBOSOMAL SUBUNIT PROTEIN US15M"/>
    <property type="match status" value="1"/>
</dbReference>
<dbReference type="Pfam" id="PF00312">
    <property type="entry name" value="Ribosomal_S15"/>
    <property type="match status" value="1"/>
</dbReference>
<dbReference type="SMART" id="SM01387">
    <property type="entry name" value="Ribosomal_S15"/>
    <property type="match status" value="1"/>
</dbReference>
<dbReference type="SUPFAM" id="SSF47060">
    <property type="entry name" value="S15/NS1 RNA-binding domain"/>
    <property type="match status" value="1"/>
</dbReference>
<dbReference type="PROSITE" id="PS00362">
    <property type="entry name" value="RIBOSOMAL_S15"/>
    <property type="match status" value="1"/>
</dbReference>
<comment type="function">
    <text evidence="1">One of the primary rRNA binding proteins, it binds directly to 16S rRNA where it helps nucleate assembly of the platform of the 30S subunit by binding and bridging several RNA helices of the 16S rRNA.</text>
</comment>
<comment type="function">
    <text evidence="1">Forms an intersubunit bridge (bridge B4) with the 23S rRNA of the 50S subunit in the ribosome.</text>
</comment>
<comment type="subunit">
    <text evidence="1">Part of the 30S ribosomal subunit. Forms a bridge to the 50S subunit in the 70S ribosome, contacting the 23S rRNA.</text>
</comment>
<comment type="similarity">
    <text evidence="1">Belongs to the universal ribosomal protein uS15 family.</text>
</comment>
<keyword id="KW-0687">Ribonucleoprotein</keyword>
<keyword id="KW-0689">Ribosomal protein</keyword>
<keyword id="KW-0694">RNA-binding</keyword>
<keyword id="KW-0699">rRNA-binding</keyword>
<accession>A6U192</accession>
<proteinExistence type="inferred from homology"/>
<feature type="chain" id="PRO_1000086823" description="Small ribosomal subunit protein uS15">
    <location>
        <begin position="1"/>
        <end position="89"/>
    </location>
</feature>
<reference key="1">
    <citation type="submission" date="2007-06" db="EMBL/GenBank/DDBJ databases">
        <title>Complete sequence of chromosome of Staphylococcus aureus subsp. aureus JH1.</title>
        <authorList>
            <consortium name="US DOE Joint Genome Institute"/>
            <person name="Copeland A."/>
            <person name="Lucas S."/>
            <person name="Lapidus A."/>
            <person name="Barry K."/>
            <person name="Detter J.C."/>
            <person name="Glavina del Rio T."/>
            <person name="Hammon N."/>
            <person name="Israni S."/>
            <person name="Dalin E."/>
            <person name="Tice H."/>
            <person name="Pitluck S."/>
            <person name="Chain P."/>
            <person name="Malfatti S."/>
            <person name="Shin M."/>
            <person name="Vergez L."/>
            <person name="Schmutz J."/>
            <person name="Larimer F."/>
            <person name="Land M."/>
            <person name="Hauser L."/>
            <person name="Kyrpides N."/>
            <person name="Ivanova N."/>
            <person name="Tomasz A."/>
            <person name="Richardson P."/>
        </authorList>
    </citation>
    <scope>NUCLEOTIDE SEQUENCE [LARGE SCALE GENOMIC DNA]</scope>
    <source>
        <strain>JH1</strain>
    </source>
</reference>
<organism>
    <name type="scientific">Staphylococcus aureus (strain JH1)</name>
    <dbReference type="NCBI Taxonomy" id="359787"/>
    <lineage>
        <taxon>Bacteria</taxon>
        <taxon>Bacillati</taxon>
        <taxon>Bacillota</taxon>
        <taxon>Bacilli</taxon>
        <taxon>Bacillales</taxon>
        <taxon>Staphylococcaceae</taxon>
        <taxon>Staphylococcus</taxon>
    </lineage>
</organism>
<name>RS15_STAA2</name>
<evidence type="ECO:0000255" key="1">
    <source>
        <dbReference type="HAMAP-Rule" id="MF_01343"/>
    </source>
</evidence>
<evidence type="ECO:0000305" key="2"/>
<protein>
    <recommendedName>
        <fullName evidence="1">Small ribosomal subunit protein uS15</fullName>
    </recommendedName>
    <alternativeName>
        <fullName evidence="2">30S ribosomal protein S15</fullName>
    </alternativeName>
</protein>